<accession>Q9Y7C8</accession>
<sequence length="528" mass="60593">MTVDALTQPHHLLSLAWNDTQQHGSWFAPLVTTSAGLLCLLLYLCSSGRRSDLPVFNPKTWWELTTMRAKRDFDANAPSWIESWFSQNDKPIRFIVDSGYCTILPSSMADEFRKMKELCMYKFLGTDFHSHLPGFDGFKEVTRDAHLITKVVMNQFQTQAPKYVKPLANEASGIITDIFGDSNEWHTVPVYNQCLDLVTRTVTFIMVGSKLAHNEEWLDIAKHHAVTMAIQARQLRLWPVILRPLVHWLEPQGAKLRAQVRRARQLLDPIIQERRAERDACRAKGIEPPRYVDSIQWFEDTAKGKWYDAAGAQLAMDFAGIYGTSDLLIGGLVDIVRHPHLLEPLRDEIRTVIGQGGWTPASLYKLKLLDSCLKESQRVKPVECATMRSYALQDVTFSNGTFIPKGELVAVAADRMSNPEVWPEPAKYDPYRYMRLREDPAKAFSAQLENTNGDHIGFGWHPRACPGRFFASKEIKMMLAYLLIRYDWKVVPDEPLQYYRHSFSVRIHPTTKLMMRRRDEDIRLPGSL</sequence>
<comment type="function">
    <text evidence="3 4 5 6 7 8 9 10 11 12 13 14 15 18">Dihydromonacolin L monooxygenase; part of the gene cluster that mediates the biosynthesis of lovastatin (also known as mevinolin, mevacor or monacolin K), a hypolipidemic inhibitor of (3S)-hydroxymethylglutaryl-coenzyme A (HMG-CoA) reductase (HMGR) (PubMed:10334994, PubMed:12929390, PubMed:21495633, PubMed:39515266). The first step in the biosynthesis of lovastatin is the production of dihydromonacolin L acid by the lovastatin nonaketide synthase lovB and the trans-acting enoyl reductase lovC via condensation of one acetyl-CoA unit and 8 malonyl-CoA units (PubMed:10334994, PubMed:10381407, PubMed:19900898, PubMed:22733743). Dihydromonacolin L acid is released from lovB by the thioesterase lovG (PubMed:23653178). Next, dihydromonacolin L acid is oxidized by the dihydromonacolin L monooxygenase lovA twice to form monacolin J acid (PubMed:12929390, PubMed:21495633). The 2-methylbutyrate moiety of lovastatin is synthesized by the lovastatin diketide synthase lovF via condensation of one acetyl-CoA unit and one malonyl-CoA unit (PubMed:19530726, PubMed:21069965). Finally, the covalent attachment of this moiety to monacolin J acid is catalyzed by the transesterase lovD to yield lovastatin (PubMed:10334994, PubMed:17113998, PubMed:18988191, PubMed:19875080, PubMed:24727900). LovD has broad substrate specificity and can also convert monacolin J to simvastatin using alpha-dimethylbutanoyl-S-methyl-3-mercaptopropionate (DMB-S-MMP) as the thioester acyl donor, and can also catalyze the reverse reaction and function as hydrolase in vitro (PubMed:19875080). LovD has much higher activity with LovF-bound 2-methylbutanoate than with free diketide substrates (PubMed:21069965).</text>
</comment>
<comment type="catalytic activity">
    <reaction evidence="12">
        <text>dihydromonacolin L carboxylate + reduced [NADPH--hemoprotein reductase] + O2 = monacolin L carboxylate + oxidized [NADPH--hemoprotein reductase] + 2 H2O + H(+)</text>
        <dbReference type="Rhea" id="RHEA:42368"/>
        <dbReference type="Rhea" id="RHEA-COMP:11964"/>
        <dbReference type="Rhea" id="RHEA-COMP:11965"/>
        <dbReference type="ChEBI" id="CHEBI:15377"/>
        <dbReference type="ChEBI" id="CHEBI:15378"/>
        <dbReference type="ChEBI" id="CHEBI:15379"/>
        <dbReference type="ChEBI" id="CHEBI:57618"/>
        <dbReference type="ChEBI" id="CHEBI:58210"/>
        <dbReference type="ChEBI" id="CHEBI:79031"/>
        <dbReference type="ChEBI" id="CHEBI:79044"/>
        <dbReference type="EC" id="1.14.14.124"/>
    </reaction>
    <physiologicalReaction direction="left-to-right" evidence="12">
        <dbReference type="Rhea" id="RHEA:42369"/>
    </physiologicalReaction>
</comment>
<comment type="catalytic activity">
    <reaction evidence="12">
        <text>monacolin L carboxylate + reduced [NADPH--hemoprotein reductase] + O2 = monacolin J carboxylate + oxidized [NADPH--hemoprotein reductase] + H2O + H(+)</text>
        <dbReference type="Rhea" id="RHEA:29599"/>
        <dbReference type="Rhea" id="RHEA-COMP:11964"/>
        <dbReference type="Rhea" id="RHEA-COMP:11965"/>
        <dbReference type="ChEBI" id="CHEBI:15377"/>
        <dbReference type="ChEBI" id="CHEBI:15378"/>
        <dbReference type="ChEBI" id="CHEBI:15379"/>
        <dbReference type="ChEBI" id="CHEBI:57618"/>
        <dbReference type="ChEBI" id="CHEBI:58210"/>
        <dbReference type="ChEBI" id="CHEBI:79035"/>
        <dbReference type="ChEBI" id="CHEBI:79044"/>
        <dbReference type="EC" id="1.14.14.125"/>
    </reaction>
    <physiologicalReaction direction="left-to-right" evidence="12">
        <dbReference type="Rhea" id="RHEA:29600"/>
    </physiologicalReaction>
</comment>
<comment type="cofactor">
    <cofactor evidence="1">
        <name>heme</name>
        <dbReference type="ChEBI" id="CHEBI:30413"/>
    </cofactor>
    <text evidence="1">Binds 1 heme group per subunit.</text>
</comment>
<comment type="biophysicochemical properties">
    <kinetics>
        <KM evidence="12">6.2 uM for monacolin L acid</KM>
    </kinetics>
</comment>
<comment type="pathway">
    <text evidence="3 5 18">Polyketide biosynthesis; lovastatin biosynthesis.</text>
</comment>
<comment type="subcellular location">
    <subcellularLocation>
        <location evidence="22">Membrane</location>
        <topology evidence="22">Single-pass membrane protein</topology>
    </subcellularLocation>
    <subcellularLocation>
        <location evidence="22">Endoplasmic reticulum membrane</location>
        <topology evidence="22">Single-pass type II membrane protein</topology>
    </subcellularLocation>
</comment>
<comment type="disruption phenotype">
    <text evidence="5">Loss of lovastatin biosynthesis. Accelerates degradation of lovastatin precursors.</text>
</comment>
<comment type="biotechnology">
    <text evidence="16 17 19">Lovastatin acts as a hypolipidemic agent that works as inhibitor of (3S)-hydroxymethylglutaryl-coenzyme A (HMG-CoA) reductase (HMGR) which reduces HMG-CoA to mevalonate and is the key step in cholesterol biosynthesis (PubMed:6933445). Lovastatin, simvastatin and related compounds are widely used to treat hypercholesteremia and reduce the risk of cardiovascular disease (PubMed:6933445). Furthermore, statins such as lovastatin were found to be anticancer agents (PubMed:29236027, PubMed:29932104).</text>
</comment>
<comment type="similarity">
    <text evidence="21">Belongs to the cytochrome P450 family.</text>
</comment>
<dbReference type="EC" id="1.14.14.124" evidence="12"/>
<dbReference type="EC" id="1.14.14.125" evidence="12"/>
<dbReference type="EMBL" id="AH007774">
    <property type="protein sequence ID" value="AAD34552.1"/>
    <property type="molecule type" value="Genomic_DNA"/>
</dbReference>
<dbReference type="SMR" id="Q9Y7C8"/>
<dbReference type="KEGG" id="ag:AAD34552"/>
<dbReference type="VEuPathDB" id="FungiDB:ATEG_09960"/>
<dbReference type="BioCyc" id="MetaCyc:MONOMER-18784"/>
<dbReference type="BRENDA" id="1.14.14.124">
    <property type="organism ID" value="536"/>
</dbReference>
<dbReference type="BRENDA" id="1.14.14.125">
    <property type="organism ID" value="536"/>
</dbReference>
<dbReference type="SABIO-RK" id="Q9Y7C8"/>
<dbReference type="UniPathway" id="UPA00875"/>
<dbReference type="GO" id="GO:0005789">
    <property type="term" value="C:endoplasmic reticulum membrane"/>
    <property type="evidence" value="ECO:0007669"/>
    <property type="project" value="UniProtKB-SubCell"/>
</dbReference>
<dbReference type="GO" id="GO:0020037">
    <property type="term" value="F:heme binding"/>
    <property type="evidence" value="ECO:0000304"/>
    <property type="project" value="UniProtKB"/>
</dbReference>
<dbReference type="GO" id="GO:0005506">
    <property type="term" value="F:iron ion binding"/>
    <property type="evidence" value="ECO:0000304"/>
    <property type="project" value="UniProtKB"/>
</dbReference>
<dbReference type="GO" id="GO:0004497">
    <property type="term" value="F:monooxygenase activity"/>
    <property type="evidence" value="ECO:0000314"/>
    <property type="project" value="UniProtKB"/>
</dbReference>
<dbReference type="GO" id="GO:0016705">
    <property type="term" value="F:oxidoreductase activity, acting on paired donors, with incorporation or reduction of molecular oxygen"/>
    <property type="evidence" value="ECO:0007669"/>
    <property type="project" value="InterPro"/>
</dbReference>
<dbReference type="GO" id="GO:0016218">
    <property type="term" value="F:polyketide synthase activity"/>
    <property type="evidence" value="ECO:0000314"/>
    <property type="project" value="UniProt"/>
</dbReference>
<dbReference type="GO" id="GO:0140735">
    <property type="term" value="P:lovastatin biosynthetic process"/>
    <property type="evidence" value="ECO:0000314"/>
    <property type="project" value="GO_Central"/>
</dbReference>
<dbReference type="GO" id="GO:0030639">
    <property type="term" value="P:polyketide biosynthetic process"/>
    <property type="evidence" value="ECO:0000314"/>
    <property type="project" value="UniProtKB"/>
</dbReference>
<dbReference type="CDD" id="cd11041">
    <property type="entry name" value="CYP503A1-like"/>
    <property type="match status" value="1"/>
</dbReference>
<dbReference type="FunFam" id="1.10.630.10:FF:000059">
    <property type="entry name" value="Cytochrome P450 monooxygenase"/>
    <property type="match status" value="1"/>
</dbReference>
<dbReference type="Gene3D" id="1.10.630.10">
    <property type="entry name" value="Cytochrome P450"/>
    <property type="match status" value="1"/>
</dbReference>
<dbReference type="InterPro" id="IPR001128">
    <property type="entry name" value="Cyt_P450"/>
</dbReference>
<dbReference type="InterPro" id="IPR002401">
    <property type="entry name" value="Cyt_P450_E_grp-I"/>
</dbReference>
<dbReference type="InterPro" id="IPR036396">
    <property type="entry name" value="Cyt_P450_sf"/>
</dbReference>
<dbReference type="PANTHER" id="PTHR46206">
    <property type="entry name" value="CYTOCHROME P450"/>
    <property type="match status" value="1"/>
</dbReference>
<dbReference type="PANTHER" id="PTHR46206:SF2">
    <property type="entry name" value="CYTOCHROME P450 MONOOXYGENASE AUSG-RELATED"/>
    <property type="match status" value="1"/>
</dbReference>
<dbReference type="Pfam" id="PF00067">
    <property type="entry name" value="p450"/>
    <property type="match status" value="1"/>
</dbReference>
<dbReference type="PRINTS" id="PR00463">
    <property type="entry name" value="EP450I"/>
</dbReference>
<dbReference type="SUPFAM" id="SSF48264">
    <property type="entry name" value="Cytochrome P450"/>
    <property type="match status" value="1"/>
</dbReference>
<protein>
    <recommendedName>
        <fullName evidence="20">Dihydromonacolin L monooxygenase LovA</fullName>
        <ecNumber evidence="12">1.14.14.124</ecNumber>
        <ecNumber evidence="12">1.14.14.125</ecNumber>
    </recommendedName>
    <alternativeName>
        <fullName evidence="20">Dihydromonacolin L hydroxylase</fullName>
    </alternativeName>
    <alternativeName>
        <fullName evidence="20">Lovastatin biosynthesis cluster protein A</fullName>
    </alternativeName>
    <alternativeName>
        <fullName evidence="20">Monacolin L hydroxylase</fullName>
    </alternativeName>
</protein>
<gene>
    <name evidence="20" type="primary">lovA</name>
</gene>
<name>LOVA_ASPTE</name>
<organism>
    <name type="scientific">Aspergillus terreus</name>
    <dbReference type="NCBI Taxonomy" id="33178"/>
    <lineage>
        <taxon>Eukaryota</taxon>
        <taxon>Fungi</taxon>
        <taxon>Dikarya</taxon>
        <taxon>Ascomycota</taxon>
        <taxon>Pezizomycotina</taxon>
        <taxon>Eurotiomycetes</taxon>
        <taxon>Eurotiomycetidae</taxon>
        <taxon>Eurotiales</taxon>
        <taxon>Aspergillaceae</taxon>
        <taxon>Aspergillus</taxon>
        <taxon>Aspergillus subgen. Circumdati</taxon>
    </lineage>
</organism>
<keyword id="KW-0256">Endoplasmic reticulum</keyword>
<keyword id="KW-0349">Heme</keyword>
<keyword id="KW-0408">Iron</keyword>
<keyword id="KW-0472">Membrane</keyword>
<keyword id="KW-0479">Metal-binding</keyword>
<keyword id="KW-0503">Monooxygenase</keyword>
<keyword id="KW-0560">Oxidoreductase</keyword>
<keyword id="KW-0735">Signal-anchor</keyword>
<keyword id="KW-0812">Transmembrane</keyword>
<keyword id="KW-1133">Transmembrane helix</keyword>
<evidence type="ECO:0000250" key="1">
    <source>
        <dbReference type="UniProtKB" id="P04798"/>
    </source>
</evidence>
<evidence type="ECO:0000255" key="2"/>
<evidence type="ECO:0000269" key="3">
    <source>
    </source>
</evidence>
<evidence type="ECO:0000269" key="4">
    <source>
    </source>
</evidence>
<evidence type="ECO:0000269" key="5">
    <source>
    </source>
</evidence>
<evidence type="ECO:0000269" key="6">
    <source>
    </source>
</evidence>
<evidence type="ECO:0000269" key="7">
    <source>
    </source>
</evidence>
<evidence type="ECO:0000269" key="8">
    <source>
    </source>
</evidence>
<evidence type="ECO:0000269" key="9">
    <source>
    </source>
</evidence>
<evidence type="ECO:0000269" key="10">
    <source>
    </source>
</evidence>
<evidence type="ECO:0000269" key="11">
    <source>
    </source>
</evidence>
<evidence type="ECO:0000269" key="12">
    <source>
    </source>
</evidence>
<evidence type="ECO:0000269" key="13">
    <source>
    </source>
</evidence>
<evidence type="ECO:0000269" key="14">
    <source>
    </source>
</evidence>
<evidence type="ECO:0000269" key="15">
    <source>
    </source>
</evidence>
<evidence type="ECO:0000269" key="16">
    <source>
    </source>
</evidence>
<evidence type="ECO:0000269" key="17">
    <source>
    </source>
</evidence>
<evidence type="ECO:0000269" key="18">
    <source>
    </source>
</evidence>
<evidence type="ECO:0000269" key="19">
    <source>
    </source>
</evidence>
<evidence type="ECO:0000303" key="20">
    <source>
    </source>
</evidence>
<evidence type="ECO:0000305" key="21"/>
<evidence type="ECO:0000305" key="22">
    <source>
    </source>
</evidence>
<feature type="chain" id="PRO_0000449798" description="Dihydromonacolin L monooxygenase LovA">
    <location>
        <begin position="1"/>
        <end position="528"/>
    </location>
</feature>
<feature type="topological domain" description="Cytoplasmic" evidence="2">
    <location>
        <begin position="1"/>
        <end position="23"/>
    </location>
</feature>
<feature type="transmembrane region" description="Helical; Signal-anchor for type II membrane protein" evidence="2">
    <location>
        <begin position="24"/>
        <end position="44"/>
    </location>
</feature>
<feature type="topological domain" description="Lumenal" evidence="2">
    <location>
        <begin position="45"/>
        <end position="528"/>
    </location>
</feature>
<feature type="binding site" description="axial binding residue" evidence="1">
    <location>
        <position position="465"/>
    </location>
    <ligand>
        <name>heme</name>
        <dbReference type="ChEBI" id="CHEBI:30413"/>
    </ligand>
    <ligandPart>
        <name>Fe</name>
        <dbReference type="ChEBI" id="CHEBI:18248"/>
    </ligandPart>
</feature>
<proteinExistence type="evidence at protein level"/>
<reference key="1">
    <citation type="journal article" date="1999" name="Science">
        <title>Modulation of polyketide synthase activity by accessory proteins during lovastatin biosynthesis.</title>
        <authorList>
            <person name="Kennedy J."/>
            <person name="Auclair K."/>
            <person name="Kendrew S.G."/>
            <person name="Park C."/>
            <person name="Vederas J.C."/>
            <person name="Hutchinson C.R."/>
        </authorList>
    </citation>
    <scope>NUCLEOTIDE SEQUENCE [GENOMIC DNA]</scope>
    <scope>IDENTIFICATION</scope>
    <scope>PATHWAY</scope>
    <source>
        <strain>ATCC 20542 / MF4845</strain>
    </source>
</reference>
<reference key="2">
    <citation type="journal article" date="1980" name="Proc. Natl. Acad. Sci. U.S.A.">
        <title>Mevinolin: a highly potent competitive inhibitor of hydroxymethylglutaryl-coenzyme A reductase and a cholesterol-lowering agent.</title>
        <authorList>
            <person name="Alberts A.W."/>
            <person name="Chen J."/>
            <person name="Kuron G."/>
            <person name="Hunt V."/>
            <person name="Huff J."/>
            <person name="Hoffman C."/>
            <person name="Rothrock J."/>
            <person name="Lopez M."/>
            <person name="Joshua H."/>
            <person name="Harris E."/>
            <person name="Patchett A."/>
            <person name="Monaghan R."/>
            <person name="Currie S."/>
            <person name="Stapley E."/>
            <person name="Albers-Schonberg G."/>
            <person name="Hensens O."/>
            <person name="Hirshfield J."/>
            <person name="Hoogsteen K."/>
            <person name="Liesch J."/>
            <person name="Springer J."/>
        </authorList>
    </citation>
    <scope>BIOTECHNOLOGY</scope>
</reference>
<reference key="3">
    <citation type="journal article" date="1999" name="Chem. Biol.">
        <title>Lovastatin biosynthesis in Aspergillus terreus: characterization of blocked mutants, enzyme activities and a multifunctional polyketide synthase gene.</title>
        <authorList>
            <person name="Hendrickson L."/>
            <person name="Davis C.R."/>
            <person name="Roach C."/>
            <person name="Nguyen D.K."/>
            <person name="Aldrich T."/>
            <person name="McAda P.C."/>
            <person name="Reeves C.D."/>
        </authorList>
    </citation>
    <scope>FUNCTION</scope>
</reference>
<reference key="4">
    <citation type="journal article" date="2003" name="Org. Biomol. Chem.">
        <title>Transformations of cyclic nonaketides by Aspergillus terreus mutants blocked for lovastatin biosynthesis at the lovA and lovC genes.</title>
        <authorList>
            <person name="Sorensen J.L."/>
            <person name="Auclair K."/>
            <person name="Kennedy J."/>
            <person name="Hutchinson C.R."/>
            <person name="Vederas J.C."/>
        </authorList>
    </citation>
    <scope>FUNCTION</scope>
    <scope>PATHWAY</scope>
    <scope>DISRUPTION PHENOTYPE</scope>
</reference>
<reference key="5">
    <citation type="journal article" date="2006" name="Chem. Biol.">
        <title>Biosynthesis of lovastatin analogs with a broadly specific acyltransferase.</title>
        <authorList>
            <person name="Xie X."/>
            <person name="Watanabe K."/>
            <person name="Wojcicki W.A."/>
            <person name="Wang C.C."/>
            <person name="Tang Y."/>
        </authorList>
    </citation>
    <scope>FUNCTION</scope>
</reference>
<reference key="6">
    <citation type="journal article" date="2009" name="Biotechnol. Bioeng.">
        <title>Rational improvement of simvastatin synthase solubility in Escherichia coli leads to higher whole-cell biocatalytic activity.</title>
        <authorList>
            <person name="Xie X."/>
            <person name="Pashkov I."/>
            <person name="Gao X."/>
            <person name="Guerrero J.L."/>
            <person name="Yeates T.O."/>
            <person name="Tang Y."/>
        </authorList>
    </citation>
    <scope>FUNCTION</scope>
</reference>
<reference key="7">
    <citation type="journal article" date="2009" name="Chem. Biol.">
        <title>Directed evolution and structural characterization of a simvastatin synthase.</title>
        <authorList>
            <person name="Gao X."/>
            <person name="Xie X."/>
            <person name="Pashkov I."/>
            <person name="Sawaya M.R."/>
            <person name="Laidman J."/>
            <person name="Zhang W."/>
            <person name="Cacho R."/>
            <person name="Yeates T.O."/>
            <person name="Tang Y."/>
        </authorList>
    </citation>
    <scope>FUNCTION</scope>
</reference>
<reference key="8">
    <citation type="journal article" date="2009" name="J. Am. Chem. Soc.">
        <title>Acyltransferase mediated polyketide release from a fungal megasynthase.</title>
        <authorList>
            <person name="Xie X."/>
            <person name="Meehan M.J."/>
            <person name="Xu W."/>
            <person name="Dorrestein P.C."/>
            <person name="Tang Y."/>
        </authorList>
    </citation>
    <scope>FUNCTION</scope>
</reference>
<reference key="9">
    <citation type="journal article" date="2009" name="Science">
        <title>Complete reconstitution of a highly reducing iterative polyketide synthase.</title>
        <authorList>
            <person name="Ma S.M."/>
            <person name="Li J.W."/>
            <person name="Choi J.W."/>
            <person name="Zhou H."/>
            <person name="Lee K.K."/>
            <person name="Moorthie V.A."/>
            <person name="Xie X."/>
            <person name="Kealey J.T."/>
            <person name="Da Silva N.A."/>
            <person name="Vederas J.C."/>
            <person name="Tang Y."/>
        </authorList>
    </citation>
    <scope>FUNCTION</scope>
</reference>
<reference key="10">
    <citation type="journal article" date="2011" name="Biochemistry">
        <title>FT-ICR-MS characterization of intermediates in the biosynthesis of the alpha-methylbutyrate side chain of lovastatin by the 277 kDa polyketide synthase LovF.</title>
        <authorList>
            <person name="Meehan M.J."/>
            <person name="Xie X."/>
            <person name="Zhao X."/>
            <person name="Xu W."/>
            <person name="Tang Y."/>
            <person name="Dorrestein P.C."/>
        </authorList>
    </citation>
    <scope>FUNCTION</scope>
</reference>
<reference key="11">
    <citation type="journal article" date="2011" name="J. Am. Chem. Soc.">
        <title>Double oxidation of the cyclic nonaketide dihydromonacolin L to monacolin J by a single cytochrome P450 monooxygenase, LovA.</title>
        <authorList>
            <person name="Barriuso J."/>
            <person name="Nguyen D.T."/>
            <person name="Li J.W."/>
            <person name="Roberts J.N."/>
            <person name="MacNevin G."/>
            <person name="Chaytor J.L."/>
            <person name="Marcus S.L."/>
            <person name="Vederas J.C."/>
            <person name="Ro D.K."/>
        </authorList>
    </citation>
    <scope>FUNCTION</scope>
    <scope>CATALYTIC ACTIVITY</scope>
    <scope>SUBCELLULAR LOCATION</scope>
    <scope>BIOPHYSICOCHEMICAL PROPERTIES</scope>
</reference>
<reference key="12">
    <citation type="journal article" date="2012" name="Proc. Natl. Acad. Sci. U.S.A.">
        <title>Crystal structure and biochemical studies of the trans-acting polyketide enoyl reductase LovC from lovastatin biosynthesis.</title>
        <authorList>
            <person name="Ames B.D."/>
            <person name="Nguyen C."/>
            <person name="Bruegger J."/>
            <person name="Smith P."/>
            <person name="Xu W."/>
            <person name="Ma S."/>
            <person name="Wong E."/>
            <person name="Wong S."/>
            <person name="Xie X."/>
            <person name="Li J.W."/>
            <person name="Vederas J.C."/>
            <person name="Tang Y."/>
            <person name="Tsai S.C."/>
        </authorList>
    </citation>
    <scope>FUNCTION</scope>
</reference>
<reference key="13">
    <citation type="journal article" date="2013" name="Angew. Chem. Int. Ed. Engl.">
        <title>LovG: the thioesterase required for dihydromonacolin L release and lovastatin nonaketide synthase turnover in lovastatin biosynthesis.</title>
        <authorList>
            <person name="Xu W."/>
            <person name="Chooi Y.H."/>
            <person name="Choi J.W."/>
            <person name="Li S."/>
            <person name="Vederas J.C."/>
            <person name="Da Silva N.A."/>
            <person name="Tang Y."/>
        </authorList>
    </citation>
    <scope>FUNCTION</scope>
</reference>
<reference key="14">
    <citation type="journal article" date="2014" name="Nat. Chem. Biol.">
        <title>The role of distant mutations and allosteric regulation on LovD active site dynamics.</title>
        <authorList>
            <person name="Jimenez-Oses G."/>
            <person name="Osuna S."/>
            <person name="Gao X."/>
            <person name="Sawaya M.R."/>
            <person name="Gilson L."/>
            <person name="Collier S.J."/>
            <person name="Huisman G.W."/>
            <person name="Yeates T.O."/>
            <person name="Tang Y."/>
            <person name="Houk K.N."/>
        </authorList>
    </citation>
    <scope>FUNCTION</scope>
</reference>
<reference key="15">
    <citation type="journal article" date="2017" name="Int. J. Mol. Sci.">
        <title>Simvastatin inhibits cell proliferation and migration in human anaplastic thyroid cancer.</title>
        <authorList>
            <person name="Chen M.C."/>
            <person name="Tsai Y.C."/>
            <person name="Tseng J.H."/>
            <person name="Liou J.J."/>
            <person name="Horng S."/>
            <person name="Wen H.C."/>
            <person name="Fan Y.C."/>
            <person name="Zhong W.B."/>
            <person name="Hsu S.P."/>
        </authorList>
    </citation>
    <scope>BIOTECHNOLOGY</scope>
</reference>
<reference key="16">
    <citation type="journal article" date="2018" name="Int. J. Mol. Sci.">
        <title>A synergistic anti-cancer effect of troglitazone and lovastatin in a human anaplastic thyroid cancer cell line and in a mouse xenograft model.</title>
        <authorList>
            <person name="Zhong W.B."/>
            <person name="Tsai Y.C."/>
            <person name="Chin L.H."/>
            <person name="Tseng J.H."/>
            <person name="Tang L.W."/>
            <person name="Horng S."/>
            <person name="Fan Y.C."/>
            <person name="Hsu S.P."/>
        </authorList>
    </citation>
    <scope>BIOTECHNOLOGY</scope>
</reference>
<reference key="17">
    <citation type="journal article" date="2025" name="Microbiol. Res.">
        <title>Development of a landing pad system for Aspergillus niger and its application in the overproduction of monacolin J.</title>
        <authorList>
            <person name="Yao L."/>
            <person name="Zheng J."/>
            <person name="Wang B."/>
            <person name="Pan L."/>
        </authorList>
    </citation>
    <scope>FUNCTION</scope>
    <scope>PATHWAY</scope>
</reference>